<accession>A5IFX9</accession>
<sequence>MAKFELYAEVDVSISGHQYPIIICRNGLIDPELINRFITSKQVLIVTNRTVAPLYLGHLQSGLPSKQCDVVILEDGEEHKNQRSLFTIYDSLIQNKHHRDTSIIALGGGVIGDMAGFAASTYQRGVRFIQLPTTLLAQVDASVGGKTAINHPAGKNMIGSFYQPQAVIIDLNTLKTLPEREFRAGIAEMIKYALLVGGPFFERIQAVLQQGLTVHSPELPLLIAECCQVKAKIVEQDERESGLRALLNLGHTFAHALETYTDYKKWLHGEAVAIGLYCAAVLSEKKGLLDKPIVDQVEKMLIHAGLPHKIPNSIDLIQLRELMSLDKKIKNNCLRFVMIKKPGACYIDDSVTEDCLHNTLINVVEGEQK</sequence>
<keyword id="KW-0028">Amino-acid biosynthesis</keyword>
<keyword id="KW-0057">Aromatic amino acid biosynthesis</keyword>
<keyword id="KW-0170">Cobalt</keyword>
<keyword id="KW-0963">Cytoplasm</keyword>
<keyword id="KW-0456">Lyase</keyword>
<keyword id="KW-0479">Metal-binding</keyword>
<keyword id="KW-0520">NAD</keyword>
<keyword id="KW-0547">Nucleotide-binding</keyword>
<keyword id="KW-0862">Zinc</keyword>
<comment type="function">
    <text evidence="1">Catalyzes the conversion of 3-deoxy-D-arabino-heptulosonate 7-phosphate (DAHP) to dehydroquinate (DHQ).</text>
</comment>
<comment type="catalytic activity">
    <reaction evidence="1">
        <text>7-phospho-2-dehydro-3-deoxy-D-arabino-heptonate = 3-dehydroquinate + phosphate</text>
        <dbReference type="Rhea" id="RHEA:21968"/>
        <dbReference type="ChEBI" id="CHEBI:32364"/>
        <dbReference type="ChEBI" id="CHEBI:43474"/>
        <dbReference type="ChEBI" id="CHEBI:58394"/>
        <dbReference type="EC" id="4.2.3.4"/>
    </reaction>
</comment>
<comment type="cofactor">
    <cofactor evidence="1">
        <name>Co(2+)</name>
        <dbReference type="ChEBI" id="CHEBI:48828"/>
    </cofactor>
    <cofactor evidence="1">
        <name>Zn(2+)</name>
        <dbReference type="ChEBI" id="CHEBI:29105"/>
    </cofactor>
    <text evidence="1">Binds 1 divalent metal cation per subunit. Can use either Co(2+) or Zn(2+).</text>
</comment>
<comment type="cofactor">
    <cofactor evidence="1">
        <name>NAD(+)</name>
        <dbReference type="ChEBI" id="CHEBI:57540"/>
    </cofactor>
</comment>
<comment type="pathway">
    <text evidence="1">Metabolic intermediate biosynthesis; chorismate biosynthesis; chorismate from D-erythrose 4-phosphate and phosphoenolpyruvate: step 2/7.</text>
</comment>
<comment type="subcellular location">
    <subcellularLocation>
        <location evidence="1">Cytoplasm</location>
    </subcellularLocation>
</comment>
<comment type="similarity">
    <text evidence="1">Belongs to the sugar phosphate cyclases superfamily. Dehydroquinate synthase family.</text>
</comment>
<proteinExistence type="inferred from homology"/>
<feature type="chain" id="PRO_1000094540" description="3-dehydroquinate synthase">
    <location>
        <begin position="1"/>
        <end position="369"/>
    </location>
</feature>
<feature type="binding site" evidence="1">
    <location>
        <begin position="75"/>
        <end position="80"/>
    </location>
    <ligand>
        <name>NAD(+)</name>
        <dbReference type="ChEBI" id="CHEBI:57540"/>
    </ligand>
</feature>
<feature type="binding site" evidence="1">
    <location>
        <begin position="109"/>
        <end position="113"/>
    </location>
    <ligand>
        <name>NAD(+)</name>
        <dbReference type="ChEBI" id="CHEBI:57540"/>
    </ligand>
</feature>
<feature type="binding site" evidence="1">
    <location>
        <begin position="133"/>
        <end position="134"/>
    </location>
    <ligand>
        <name>NAD(+)</name>
        <dbReference type="ChEBI" id="CHEBI:57540"/>
    </ligand>
</feature>
<feature type="binding site" evidence="1">
    <location>
        <position position="146"/>
    </location>
    <ligand>
        <name>NAD(+)</name>
        <dbReference type="ChEBI" id="CHEBI:57540"/>
    </ligand>
</feature>
<feature type="binding site" evidence="1">
    <location>
        <position position="155"/>
    </location>
    <ligand>
        <name>NAD(+)</name>
        <dbReference type="ChEBI" id="CHEBI:57540"/>
    </ligand>
</feature>
<feature type="binding site" evidence="1">
    <location>
        <begin position="173"/>
        <end position="176"/>
    </location>
    <ligand>
        <name>NAD(+)</name>
        <dbReference type="ChEBI" id="CHEBI:57540"/>
    </ligand>
</feature>
<feature type="binding site" evidence="1">
    <location>
        <position position="188"/>
    </location>
    <ligand>
        <name>Zn(2+)</name>
        <dbReference type="ChEBI" id="CHEBI:29105"/>
    </ligand>
</feature>
<feature type="binding site" evidence="1">
    <location>
        <position position="251"/>
    </location>
    <ligand>
        <name>Zn(2+)</name>
        <dbReference type="ChEBI" id="CHEBI:29105"/>
    </ligand>
</feature>
<feature type="binding site" evidence="1">
    <location>
        <position position="268"/>
    </location>
    <ligand>
        <name>Zn(2+)</name>
        <dbReference type="ChEBI" id="CHEBI:29105"/>
    </ligand>
</feature>
<dbReference type="EC" id="4.2.3.4" evidence="1"/>
<dbReference type="EMBL" id="CP000675">
    <property type="protein sequence ID" value="ABQ56279.1"/>
    <property type="molecule type" value="Genomic_DNA"/>
</dbReference>
<dbReference type="RefSeq" id="WP_011946024.1">
    <property type="nucleotide sequence ID" value="NC_009494.2"/>
</dbReference>
<dbReference type="SMR" id="A5IFX9"/>
<dbReference type="KEGG" id="lpc:LPC_2357"/>
<dbReference type="HOGENOM" id="CLU_001201_0_2_6"/>
<dbReference type="UniPathway" id="UPA00053">
    <property type="reaction ID" value="UER00085"/>
</dbReference>
<dbReference type="GO" id="GO:0005737">
    <property type="term" value="C:cytoplasm"/>
    <property type="evidence" value="ECO:0007669"/>
    <property type="project" value="UniProtKB-SubCell"/>
</dbReference>
<dbReference type="GO" id="GO:0003856">
    <property type="term" value="F:3-dehydroquinate synthase activity"/>
    <property type="evidence" value="ECO:0007669"/>
    <property type="project" value="UniProtKB-UniRule"/>
</dbReference>
<dbReference type="GO" id="GO:0046872">
    <property type="term" value="F:metal ion binding"/>
    <property type="evidence" value="ECO:0007669"/>
    <property type="project" value="UniProtKB-KW"/>
</dbReference>
<dbReference type="GO" id="GO:0000166">
    <property type="term" value="F:nucleotide binding"/>
    <property type="evidence" value="ECO:0007669"/>
    <property type="project" value="UniProtKB-KW"/>
</dbReference>
<dbReference type="GO" id="GO:0008652">
    <property type="term" value="P:amino acid biosynthetic process"/>
    <property type="evidence" value="ECO:0007669"/>
    <property type="project" value="UniProtKB-KW"/>
</dbReference>
<dbReference type="GO" id="GO:0009073">
    <property type="term" value="P:aromatic amino acid family biosynthetic process"/>
    <property type="evidence" value="ECO:0007669"/>
    <property type="project" value="UniProtKB-KW"/>
</dbReference>
<dbReference type="GO" id="GO:0009423">
    <property type="term" value="P:chorismate biosynthetic process"/>
    <property type="evidence" value="ECO:0007669"/>
    <property type="project" value="UniProtKB-UniRule"/>
</dbReference>
<dbReference type="CDD" id="cd08195">
    <property type="entry name" value="DHQS"/>
    <property type="match status" value="1"/>
</dbReference>
<dbReference type="FunFam" id="3.40.50.1970:FF:000001">
    <property type="entry name" value="3-dehydroquinate synthase"/>
    <property type="match status" value="1"/>
</dbReference>
<dbReference type="Gene3D" id="3.40.50.1970">
    <property type="match status" value="1"/>
</dbReference>
<dbReference type="Gene3D" id="1.20.1090.10">
    <property type="entry name" value="Dehydroquinate synthase-like - alpha domain"/>
    <property type="match status" value="1"/>
</dbReference>
<dbReference type="HAMAP" id="MF_00110">
    <property type="entry name" value="DHQ_synthase"/>
    <property type="match status" value="1"/>
</dbReference>
<dbReference type="InterPro" id="IPR050071">
    <property type="entry name" value="Dehydroquinate_synthase"/>
</dbReference>
<dbReference type="InterPro" id="IPR016037">
    <property type="entry name" value="DHQ_synth_AroB"/>
</dbReference>
<dbReference type="InterPro" id="IPR030963">
    <property type="entry name" value="DHQ_synth_fam"/>
</dbReference>
<dbReference type="InterPro" id="IPR030960">
    <property type="entry name" value="DHQS/DOIS_N"/>
</dbReference>
<dbReference type="InterPro" id="IPR056179">
    <property type="entry name" value="DHQS_C"/>
</dbReference>
<dbReference type="NCBIfam" id="TIGR01357">
    <property type="entry name" value="aroB"/>
    <property type="match status" value="1"/>
</dbReference>
<dbReference type="PANTHER" id="PTHR43622">
    <property type="entry name" value="3-DEHYDROQUINATE SYNTHASE"/>
    <property type="match status" value="1"/>
</dbReference>
<dbReference type="PANTHER" id="PTHR43622:SF7">
    <property type="entry name" value="3-DEHYDROQUINATE SYNTHASE, CHLOROPLASTIC"/>
    <property type="match status" value="1"/>
</dbReference>
<dbReference type="Pfam" id="PF01761">
    <property type="entry name" value="DHQ_synthase"/>
    <property type="match status" value="1"/>
</dbReference>
<dbReference type="Pfam" id="PF24621">
    <property type="entry name" value="DHQS_C"/>
    <property type="match status" value="1"/>
</dbReference>
<dbReference type="PIRSF" id="PIRSF001455">
    <property type="entry name" value="DHQ_synth"/>
    <property type="match status" value="1"/>
</dbReference>
<dbReference type="SUPFAM" id="SSF56796">
    <property type="entry name" value="Dehydroquinate synthase-like"/>
    <property type="match status" value="1"/>
</dbReference>
<gene>
    <name evidence="1" type="primary">aroB</name>
    <name type="ordered locus">LPC_2357</name>
</gene>
<reference key="1">
    <citation type="submission" date="2006-11" db="EMBL/GenBank/DDBJ databases">
        <title>Identification and characterization of a new conjugation/ type IVA secretion system (trb/tra) of L. pneumophila Corby localized on a mobile genomic island.</title>
        <authorList>
            <person name="Gloeckner G."/>
            <person name="Albert-Weissenberger C."/>
            <person name="Weinmann E."/>
            <person name="Jacobi S."/>
            <person name="Schunder E."/>
            <person name="Steinert M."/>
            <person name="Buchrieser C."/>
            <person name="Hacker J."/>
            <person name="Heuner K."/>
        </authorList>
    </citation>
    <scope>NUCLEOTIDE SEQUENCE [LARGE SCALE GENOMIC DNA]</scope>
    <source>
        <strain>Corby</strain>
    </source>
</reference>
<evidence type="ECO:0000255" key="1">
    <source>
        <dbReference type="HAMAP-Rule" id="MF_00110"/>
    </source>
</evidence>
<organism>
    <name type="scientific">Legionella pneumophila (strain Corby)</name>
    <dbReference type="NCBI Taxonomy" id="400673"/>
    <lineage>
        <taxon>Bacteria</taxon>
        <taxon>Pseudomonadati</taxon>
        <taxon>Pseudomonadota</taxon>
        <taxon>Gammaproteobacteria</taxon>
        <taxon>Legionellales</taxon>
        <taxon>Legionellaceae</taxon>
        <taxon>Legionella</taxon>
    </lineage>
</organism>
<name>AROB_LEGPC</name>
<protein>
    <recommendedName>
        <fullName evidence="1">3-dehydroquinate synthase</fullName>
        <shortName evidence="1">DHQS</shortName>
        <ecNumber evidence="1">4.2.3.4</ecNumber>
    </recommendedName>
</protein>